<gene>
    <name type="primary">S7</name>
</gene>
<protein>
    <recommendedName>
        <fullName>Non-structural protein 5</fullName>
        <shortName>NS5</shortName>
    </recommendedName>
    <alternativeName>
        <fullName>NS16</fullName>
    </alternativeName>
</protein>
<sequence length="141" mass="14874">MPCQDTVSLSIQHTHVIIQNSCCTTVSTSASTSATAYGLGCLALGCAGIAAAGICICCLIHGCPACPRRLGVRKQSSLSKQGHVSFHHLNPSDRVSRPYHPSCPTDVDLYLGGVQHDPDYVSHAQPIETQPQPLPPPPAYS</sequence>
<feature type="chain" id="PRO_0000404183" description="Non-structural protein 5">
    <location>
        <begin position="1"/>
        <end position="141"/>
    </location>
</feature>
<feature type="transmembrane region" description="Helical" evidence="1">
    <location>
        <begin position="40"/>
        <end position="60"/>
    </location>
</feature>
<name>VNS5_AQRVG</name>
<dbReference type="EMBL" id="EF589104">
    <property type="protein sequence ID" value="ABV01045.1"/>
    <property type="molecule type" value="Genomic_RNA"/>
</dbReference>
<dbReference type="RefSeq" id="YP_001837100.1">
    <property type="nucleotide sequence ID" value="NC_010590.1"/>
</dbReference>
<dbReference type="KEGG" id="vg:6218805"/>
<dbReference type="Proteomes" id="UP000001674">
    <property type="component" value="Genome"/>
</dbReference>
<dbReference type="GO" id="GO:0033644">
    <property type="term" value="C:host cell membrane"/>
    <property type="evidence" value="ECO:0007669"/>
    <property type="project" value="UniProtKB-SubCell"/>
</dbReference>
<dbReference type="GO" id="GO:0016020">
    <property type="term" value="C:membrane"/>
    <property type="evidence" value="ECO:0007669"/>
    <property type="project" value="UniProtKB-KW"/>
</dbReference>
<keyword id="KW-1043">Host membrane</keyword>
<keyword id="KW-0472">Membrane</keyword>
<keyword id="KW-1185">Reference proteome</keyword>
<keyword id="KW-0812">Transmembrane</keyword>
<keyword id="KW-1133">Transmembrane helix</keyword>
<reference key="1">
    <citation type="journal article" date="2008" name="Virology">
        <title>Complete characterisation of the American grass carp reovirus genome (genus Aquareovirus: family Reoviridae) reveals an evolutionary link between aquareoviruses and coltiviruses.</title>
        <authorList>
            <person name="Mohd Jaafar F."/>
            <person name="Goodwin A.E."/>
            <person name="Belhouchet M."/>
            <person name="Merry G."/>
            <person name="Fang Q."/>
            <person name="Cantaloube J.F."/>
            <person name="Biagini P."/>
            <person name="de Micco P."/>
            <person name="Mertens P.P."/>
            <person name="Attoui H."/>
        </authorList>
    </citation>
    <scope>NUCLEOTIDE SEQUENCE [GENOMIC RNA]</scope>
</reference>
<comment type="subcellular location">
    <subcellularLocation>
        <location evidence="2">Host membrane</location>
        <topology evidence="2">Single-pass membrane protein</topology>
    </subcellularLocation>
</comment>
<comment type="similarity">
    <text evidence="2">Belongs to the aquareoviridae NS5 protein family.</text>
</comment>
<organismHost>
    <name type="scientific">Ctenopharyngodon idella</name>
    <name type="common">Grass carp</name>
    <name type="synonym">Leuciscus idella</name>
    <dbReference type="NCBI Taxonomy" id="7959"/>
</organismHost>
<evidence type="ECO:0000255" key="1"/>
<evidence type="ECO:0000305" key="2"/>
<proteinExistence type="inferred from homology"/>
<accession>B2BNE5</accession>
<organism>
    <name type="scientific">Aquareovirus G (isolate American grass carp/USA/PB01-155/-)</name>
    <name type="common">AQRV-G</name>
    <dbReference type="NCBI Taxonomy" id="648234"/>
    <lineage>
        <taxon>Viruses</taxon>
        <taxon>Riboviria</taxon>
        <taxon>Orthornavirae</taxon>
        <taxon>Duplornaviricota</taxon>
        <taxon>Resentoviricetes</taxon>
        <taxon>Reovirales</taxon>
        <taxon>Spinareoviridae</taxon>
        <taxon>Aquareovirus</taxon>
        <taxon>Aquareovirus graminis</taxon>
    </lineage>
</organism>